<accession>B2UYW3</accession>
<feature type="chain" id="PRO_1000098560" description="Threonine--tRNA ligase">
    <location>
        <begin position="1"/>
        <end position="643"/>
    </location>
</feature>
<feature type="domain" description="TGS" evidence="2">
    <location>
        <begin position="1"/>
        <end position="61"/>
    </location>
</feature>
<feature type="region of interest" description="Catalytic" evidence="1">
    <location>
        <begin position="240"/>
        <end position="540"/>
    </location>
</feature>
<feature type="binding site" evidence="1">
    <location>
        <position position="335"/>
    </location>
    <ligand>
        <name>Zn(2+)</name>
        <dbReference type="ChEBI" id="CHEBI:29105"/>
    </ligand>
</feature>
<feature type="binding site" evidence="1">
    <location>
        <position position="386"/>
    </location>
    <ligand>
        <name>Zn(2+)</name>
        <dbReference type="ChEBI" id="CHEBI:29105"/>
    </ligand>
</feature>
<feature type="binding site" evidence="1">
    <location>
        <position position="517"/>
    </location>
    <ligand>
        <name>Zn(2+)</name>
        <dbReference type="ChEBI" id="CHEBI:29105"/>
    </ligand>
</feature>
<proteinExistence type="inferred from homology"/>
<protein>
    <recommendedName>
        <fullName evidence="1">Threonine--tRNA ligase</fullName>
        <ecNumber evidence="1">6.1.1.3</ecNumber>
    </recommendedName>
    <alternativeName>
        <fullName evidence="1">Threonyl-tRNA synthetase</fullName>
        <shortName evidence="1">ThrRS</shortName>
    </alternativeName>
</protein>
<keyword id="KW-0030">Aminoacyl-tRNA synthetase</keyword>
<keyword id="KW-0067">ATP-binding</keyword>
<keyword id="KW-0963">Cytoplasm</keyword>
<keyword id="KW-0436">Ligase</keyword>
<keyword id="KW-0479">Metal-binding</keyword>
<keyword id="KW-0547">Nucleotide-binding</keyword>
<keyword id="KW-0648">Protein biosynthesis</keyword>
<keyword id="KW-0694">RNA-binding</keyword>
<keyword id="KW-0820">tRNA-binding</keyword>
<keyword id="KW-0862">Zinc</keyword>
<organism>
    <name type="scientific">Clostridium botulinum (strain Alaska E43 / Type E3)</name>
    <dbReference type="NCBI Taxonomy" id="508767"/>
    <lineage>
        <taxon>Bacteria</taxon>
        <taxon>Bacillati</taxon>
        <taxon>Bacillota</taxon>
        <taxon>Clostridia</taxon>
        <taxon>Eubacteriales</taxon>
        <taxon>Clostridiaceae</taxon>
        <taxon>Clostridium</taxon>
    </lineage>
</organism>
<comment type="function">
    <text evidence="1">Catalyzes the attachment of threonine to tRNA(Thr) in a two-step reaction: L-threonine is first activated by ATP to form Thr-AMP and then transferred to the acceptor end of tRNA(Thr). Also edits incorrectly charged L-seryl-tRNA(Thr).</text>
</comment>
<comment type="catalytic activity">
    <reaction evidence="1">
        <text>tRNA(Thr) + L-threonine + ATP = L-threonyl-tRNA(Thr) + AMP + diphosphate + H(+)</text>
        <dbReference type="Rhea" id="RHEA:24624"/>
        <dbReference type="Rhea" id="RHEA-COMP:9670"/>
        <dbReference type="Rhea" id="RHEA-COMP:9704"/>
        <dbReference type="ChEBI" id="CHEBI:15378"/>
        <dbReference type="ChEBI" id="CHEBI:30616"/>
        <dbReference type="ChEBI" id="CHEBI:33019"/>
        <dbReference type="ChEBI" id="CHEBI:57926"/>
        <dbReference type="ChEBI" id="CHEBI:78442"/>
        <dbReference type="ChEBI" id="CHEBI:78534"/>
        <dbReference type="ChEBI" id="CHEBI:456215"/>
        <dbReference type="EC" id="6.1.1.3"/>
    </reaction>
</comment>
<comment type="cofactor">
    <cofactor evidence="1">
        <name>Zn(2+)</name>
        <dbReference type="ChEBI" id="CHEBI:29105"/>
    </cofactor>
    <text evidence="1">Binds 1 zinc ion per subunit.</text>
</comment>
<comment type="subunit">
    <text evidence="1">Homodimer.</text>
</comment>
<comment type="subcellular location">
    <subcellularLocation>
        <location evidence="1">Cytoplasm</location>
    </subcellularLocation>
</comment>
<comment type="similarity">
    <text evidence="1">Belongs to the class-II aminoacyl-tRNA synthetase family.</text>
</comment>
<name>SYT_CLOBA</name>
<dbReference type="EC" id="6.1.1.3" evidence="1"/>
<dbReference type="EMBL" id="CP001078">
    <property type="protein sequence ID" value="ACD51967.1"/>
    <property type="molecule type" value="Genomic_DNA"/>
</dbReference>
<dbReference type="RefSeq" id="WP_012450212.1">
    <property type="nucleotide sequence ID" value="NC_010723.1"/>
</dbReference>
<dbReference type="SMR" id="B2UYW3"/>
<dbReference type="KEGG" id="cbt:CLH_0333"/>
<dbReference type="HOGENOM" id="CLU_008554_0_1_9"/>
<dbReference type="GO" id="GO:0005737">
    <property type="term" value="C:cytoplasm"/>
    <property type="evidence" value="ECO:0007669"/>
    <property type="project" value="UniProtKB-SubCell"/>
</dbReference>
<dbReference type="GO" id="GO:0005524">
    <property type="term" value="F:ATP binding"/>
    <property type="evidence" value="ECO:0007669"/>
    <property type="project" value="UniProtKB-UniRule"/>
</dbReference>
<dbReference type="GO" id="GO:0140096">
    <property type="term" value="F:catalytic activity, acting on a protein"/>
    <property type="evidence" value="ECO:0007669"/>
    <property type="project" value="UniProtKB-ARBA"/>
</dbReference>
<dbReference type="GO" id="GO:0046872">
    <property type="term" value="F:metal ion binding"/>
    <property type="evidence" value="ECO:0007669"/>
    <property type="project" value="UniProtKB-KW"/>
</dbReference>
<dbReference type="GO" id="GO:0004829">
    <property type="term" value="F:threonine-tRNA ligase activity"/>
    <property type="evidence" value="ECO:0007669"/>
    <property type="project" value="UniProtKB-UniRule"/>
</dbReference>
<dbReference type="GO" id="GO:0016740">
    <property type="term" value="F:transferase activity"/>
    <property type="evidence" value="ECO:0007669"/>
    <property type="project" value="UniProtKB-ARBA"/>
</dbReference>
<dbReference type="GO" id="GO:0000049">
    <property type="term" value="F:tRNA binding"/>
    <property type="evidence" value="ECO:0007669"/>
    <property type="project" value="UniProtKB-KW"/>
</dbReference>
<dbReference type="GO" id="GO:0006435">
    <property type="term" value="P:threonyl-tRNA aminoacylation"/>
    <property type="evidence" value="ECO:0007669"/>
    <property type="project" value="UniProtKB-UniRule"/>
</dbReference>
<dbReference type="CDD" id="cd01667">
    <property type="entry name" value="TGS_ThrRS"/>
    <property type="match status" value="1"/>
</dbReference>
<dbReference type="CDD" id="cd00860">
    <property type="entry name" value="ThrRS_anticodon"/>
    <property type="match status" value="1"/>
</dbReference>
<dbReference type="CDD" id="cd00771">
    <property type="entry name" value="ThrRS_core"/>
    <property type="match status" value="1"/>
</dbReference>
<dbReference type="FunFam" id="3.30.54.20:FF:000002">
    <property type="entry name" value="Threonine--tRNA ligase"/>
    <property type="match status" value="1"/>
</dbReference>
<dbReference type="FunFam" id="3.30.930.10:FF:000002">
    <property type="entry name" value="Threonine--tRNA ligase"/>
    <property type="match status" value="1"/>
</dbReference>
<dbReference type="FunFam" id="3.40.50.800:FF:000001">
    <property type="entry name" value="Threonine--tRNA ligase"/>
    <property type="match status" value="1"/>
</dbReference>
<dbReference type="FunFam" id="3.30.980.10:FF:000005">
    <property type="entry name" value="Threonyl-tRNA synthetase, mitochondrial"/>
    <property type="match status" value="1"/>
</dbReference>
<dbReference type="Gene3D" id="3.10.20.30">
    <property type="match status" value="1"/>
</dbReference>
<dbReference type="Gene3D" id="3.30.54.20">
    <property type="match status" value="1"/>
</dbReference>
<dbReference type="Gene3D" id="3.40.50.800">
    <property type="entry name" value="Anticodon-binding domain"/>
    <property type="match status" value="1"/>
</dbReference>
<dbReference type="Gene3D" id="3.30.930.10">
    <property type="entry name" value="Bira Bifunctional Protein, Domain 2"/>
    <property type="match status" value="1"/>
</dbReference>
<dbReference type="Gene3D" id="3.30.980.10">
    <property type="entry name" value="Threonyl-trna Synthetase, Chain A, domain 2"/>
    <property type="match status" value="1"/>
</dbReference>
<dbReference type="HAMAP" id="MF_00184">
    <property type="entry name" value="Thr_tRNA_synth"/>
    <property type="match status" value="1"/>
</dbReference>
<dbReference type="InterPro" id="IPR002314">
    <property type="entry name" value="aa-tRNA-synt_IIb"/>
</dbReference>
<dbReference type="InterPro" id="IPR006195">
    <property type="entry name" value="aa-tRNA-synth_II"/>
</dbReference>
<dbReference type="InterPro" id="IPR045864">
    <property type="entry name" value="aa-tRNA-synth_II/BPL/LPL"/>
</dbReference>
<dbReference type="InterPro" id="IPR004154">
    <property type="entry name" value="Anticodon-bd"/>
</dbReference>
<dbReference type="InterPro" id="IPR036621">
    <property type="entry name" value="Anticodon-bd_dom_sf"/>
</dbReference>
<dbReference type="InterPro" id="IPR012675">
    <property type="entry name" value="Beta-grasp_dom_sf"/>
</dbReference>
<dbReference type="InterPro" id="IPR004095">
    <property type="entry name" value="TGS"/>
</dbReference>
<dbReference type="InterPro" id="IPR012676">
    <property type="entry name" value="TGS-like"/>
</dbReference>
<dbReference type="InterPro" id="IPR002320">
    <property type="entry name" value="Thr-tRNA-ligase_IIa"/>
</dbReference>
<dbReference type="InterPro" id="IPR018163">
    <property type="entry name" value="Thr/Ala-tRNA-synth_IIc_edit"/>
</dbReference>
<dbReference type="InterPro" id="IPR047246">
    <property type="entry name" value="ThrRS_anticodon"/>
</dbReference>
<dbReference type="InterPro" id="IPR033728">
    <property type="entry name" value="ThrRS_core"/>
</dbReference>
<dbReference type="InterPro" id="IPR012947">
    <property type="entry name" value="tRNA_SAD"/>
</dbReference>
<dbReference type="NCBIfam" id="TIGR00418">
    <property type="entry name" value="thrS"/>
    <property type="match status" value="1"/>
</dbReference>
<dbReference type="PANTHER" id="PTHR11451:SF56">
    <property type="entry name" value="THREONINE--TRNA LIGASE 1"/>
    <property type="match status" value="1"/>
</dbReference>
<dbReference type="PANTHER" id="PTHR11451">
    <property type="entry name" value="THREONINE-TRNA LIGASE"/>
    <property type="match status" value="1"/>
</dbReference>
<dbReference type="Pfam" id="PF03129">
    <property type="entry name" value="HGTP_anticodon"/>
    <property type="match status" value="1"/>
</dbReference>
<dbReference type="Pfam" id="PF02824">
    <property type="entry name" value="TGS"/>
    <property type="match status" value="1"/>
</dbReference>
<dbReference type="Pfam" id="PF00587">
    <property type="entry name" value="tRNA-synt_2b"/>
    <property type="match status" value="1"/>
</dbReference>
<dbReference type="Pfam" id="PF07973">
    <property type="entry name" value="tRNA_SAD"/>
    <property type="match status" value="1"/>
</dbReference>
<dbReference type="PRINTS" id="PR01047">
    <property type="entry name" value="TRNASYNTHTHR"/>
</dbReference>
<dbReference type="SMART" id="SM00863">
    <property type="entry name" value="tRNA_SAD"/>
    <property type="match status" value="1"/>
</dbReference>
<dbReference type="SUPFAM" id="SSF52954">
    <property type="entry name" value="Class II aaRS ABD-related"/>
    <property type="match status" value="1"/>
</dbReference>
<dbReference type="SUPFAM" id="SSF55681">
    <property type="entry name" value="Class II aaRS and biotin synthetases"/>
    <property type="match status" value="1"/>
</dbReference>
<dbReference type="SUPFAM" id="SSF81271">
    <property type="entry name" value="TGS-like"/>
    <property type="match status" value="1"/>
</dbReference>
<dbReference type="SUPFAM" id="SSF55186">
    <property type="entry name" value="ThrRS/AlaRS common domain"/>
    <property type="match status" value="1"/>
</dbReference>
<dbReference type="PROSITE" id="PS50862">
    <property type="entry name" value="AA_TRNA_LIGASE_II"/>
    <property type="match status" value="1"/>
</dbReference>
<dbReference type="PROSITE" id="PS51880">
    <property type="entry name" value="TGS"/>
    <property type="match status" value="1"/>
</dbReference>
<sequence length="643" mass="73796">MIKVSLKDGSVKEFEAGLSVYEIAKSISEGLARNACCGVVNGKVCDLRNKINEDVSLSICTFDSQEGKDAVRHSISHVLAYAVKRLFPQTKLAIGPSIATGFYYDFDKDVAFSAQDLEKLEAEMKKIIKENPSIEKFELPRDEALELMKDEPYKVELINDLGEDEIISFYKIGEFTDLCAGPHVMSLKPIKALKLTRSAGAYWKGDEKNKMLTRIYGTAFLKKSELDEYLEAIEEAKKRDHNKLGRELKLFTTDENVGQGLPLLMPKGAKIVQTLQRWVEDEEERRGYVLTKTPLMAKSDLYKISGHWDHYKDGMFVLGDEEKDEEVFALRPMTCPFQYTIYNAEQHSYRDLPIRYGETSTLFRNESSGEMHGLIRVRQFTLADGHLIVTPEQLEEEFKGVLELIQYLMKTLGIDEDISYRFSKWDPNNTEKYINDPEAWNKTQDTMRTILDHLKINYVEADDEAAFYGPKLDLQCRNVHGKEDTLFTVQIDFALAERFDMSYIDKNGEKKRPYIIHRSSIGCYERTLAMLIEKYAGAFPTWLSPVQVKVLPISDKYNDYAESVVKSLRNKGVRIEADYRAEKIGYKIREARLERTPYILVVGEKEAANNEVSVRSRKNDDEGAIKLDAFTERLLNEIATKER</sequence>
<gene>
    <name evidence="1" type="primary">thrS</name>
    <name type="ordered locus">CLH_0333</name>
</gene>
<evidence type="ECO:0000255" key="1">
    <source>
        <dbReference type="HAMAP-Rule" id="MF_00184"/>
    </source>
</evidence>
<evidence type="ECO:0000255" key="2">
    <source>
        <dbReference type="PROSITE-ProRule" id="PRU01228"/>
    </source>
</evidence>
<reference key="1">
    <citation type="submission" date="2008-05" db="EMBL/GenBank/DDBJ databases">
        <title>Complete genome sequence of Clostridium botulinum E3 str. Alaska E43.</title>
        <authorList>
            <person name="Brinkac L.M."/>
            <person name="Brown J.L."/>
            <person name="Bruce D."/>
            <person name="Detter C."/>
            <person name="Munk C."/>
            <person name="Smith L.A."/>
            <person name="Smith T.J."/>
            <person name="Sutton G."/>
            <person name="Brettin T.S."/>
        </authorList>
    </citation>
    <scope>NUCLEOTIDE SEQUENCE [LARGE SCALE GENOMIC DNA]</scope>
    <source>
        <strain>Alaska E43 / Type E3</strain>
    </source>
</reference>